<protein>
    <recommendedName>
        <fullName>SIGLEC family-like protein 1</fullName>
    </recommendedName>
</protein>
<organism>
    <name type="scientific">Homo sapiens</name>
    <name type="common">Human</name>
    <dbReference type="NCBI Taxonomy" id="9606"/>
    <lineage>
        <taxon>Eukaryota</taxon>
        <taxon>Metazoa</taxon>
        <taxon>Chordata</taxon>
        <taxon>Craniata</taxon>
        <taxon>Vertebrata</taxon>
        <taxon>Euteleostomi</taxon>
        <taxon>Mammalia</taxon>
        <taxon>Eutheria</taxon>
        <taxon>Euarchontoglires</taxon>
        <taxon>Primates</taxon>
        <taxon>Haplorrhini</taxon>
        <taxon>Catarrhini</taxon>
        <taxon>Hominidae</taxon>
        <taxon>Homo</taxon>
    </lineage>
</organism>
<reference key="1">
    <citation type="journal article" date="2004" name="Nat. Genet.">
        <title>Complete sequencing and characterization of 21,243 full-length human cDNAs.</title>
        <authorList>
            <person name="Ota T."/>
            <person name="Suzuki Y."/>
            <person name="Nishikawa T."/>
            <person name="Otsuki T."/>
            <person name="Sugiyama T."/>
            <person name="Irie R."/>
            <person name="Wakamatsu A."/>
            <person name="Hayashi K."/>
            <person name="Sato H."/>
            <person name="Nagai K."/>
            <person name="Kimura K."/>
            <person name="Makita H."/>
            <person name="Sekine M."/>
            <person name="Obayashi M."/>
            <person name="Nishi T."/>
            <person name="Shibahara T."/>
            <person name="Tanaka T."/>
            <person name="Ishii S."/>
            <person name="Yamamoto J."/>
            <person name="Saito K."/>
            <person name="Kawai Y."/>
            <person name="Isono Y."/>
            <person name="Nakamura Y."/>
            <person name="Nagahari K."/>
            <person name="Murakami K."/>
            <person name="Yasuda T."/>
            <person name="Iwayanagi T."/>
            <person name="Wagatsuma M."/>
            <person name="Shiratori A."/>
            <person name="Sudo H."/>
            <person name="Hosoiri T."/>
            <person name="Kaku Y."/>
            <person name="Kodaira H."/>
            <person name="Kondo H."/>
            <person name="Sugawara M."/>
            <person name="Takahashi M."/>
            <person name="Kanda K."/>
            <person name="Yokoi T."/>
            <person name="Furuya T."/>
            <person name="Kikkawa E."/>
            <person name="Omura Y."/>
            <person name="Abe K."/>
            <person name="Kamihara K."/>
            <person name="Katsuta N."/>
            <person name="Sato K."/>
            <person name="Tanikawa M."/>
            <person name="Yamazaki M."/>
            <person name="Ninomiya K."/>
            <person name="Ishibashi T."/>
            <person name="Yamashita H."/>
            <person name="Murakawa K."/>
            <person name="Fujimori K."/>
            <person name="Tanai H."/>
            <person name="Kimata M."/>
            <person name="Watanabe M."/>
            <person name="Hiraoka S."/>
            <person name="Chiba Y."/>
            <person name="Ishida S."/>
            <person name="Ono Y."/>
            <person name="Takiguchi S."/>
            <person name="Watanabe S."/>
            <person name="Yosida M."/>
            <person name="Hotuta T."/>
            <person name="Kusano J."/>
            <person name="Kanehori K."/>
            <person name="Takahashi-Fujii A."/>
            <person name="Hara H."/>
            <person name="Tanase T.-O."/>
            <person name="Nomura Y."/>
            <person name="Togiya S."/>
            <person name="Komai F."/>
            <person name="Hara R."/>
            <person name="Takeuchi K."/>
            <person name="Arita M."/>
            <person name="Imose N."/>
            <person name="Musashino K."/>
            <person name="Yuuki H."/>
            <person name="Oshima A."/>
            <person name="Sasaki N."/>
            <person name="Aotsuka S."/>
            <person name="Yoshikawa Y."/>
            <person name="Matsunawa H."/>
            <person name="Ichihara T."/>
            <person name="Shiohata N."/>
            <person name="Sano S."/>
            <person name="Moriya S."/>
            <person name="Momiyama H."/>
            <person name="Satoh N."/>
            <person name="Takami S."/>
            <person name="Terashima Y."/>
            <person name="Suzuki O."/>
            <person name="Nakagawa S."/>
            <person name="Senoh A."/>
            <person name="Mizoguchi H."/>
            <person name="Goto Y."/>
            <person name="Shimizu F."/>
            <person name="Wakebe H."/>
            <person name="Hishigaki H."/>
            <person name="Watanabe T."/>
            <person name="Sugiyama A."/>
            <person name="Takemoto M."/>
            <person name="Kawakami B."/>
            <person name="Yamazaki M."/>
            <person name="Watanabe K."/>
            <person name="Kumagai A."/>
            <person name="Itakura S."/>
            <person name="Fukuzumi Y."/>
            <person name="Fujimori Y."/>
            <person name="Komiyama M."/>
            <person name="Tashiro H."/>
            <person name="Tanigami A."/>
            <person name="Fujiwara T."/>
            <person name="Ono T."/>
            <person name="Yamada K."/>
            <person name="Fujii Y."/>
            <person name="Ozaki K."/>
            <person name="Hirao M."/>
            <person name="Ohmori Y."/>
            <person name="Kawabata A."/>
            <person name="Hikiji T."/>
            <person name="Kobatake N."/>
            <person name="Inagaki H."/>
            <person name="Ikema Y."/>
            <person name="Okamoto S."/>
            <person name="Okitani R."/>
            <person name="Kawakami T."/>
            <person name="Noguchi S."/>
            <person name="Itoh T."/>
            <person name="Shigeta K."/>
            <person name="Senba T."/>
            <person name="Matsumura K."/>
            <person name="Nakajima Y."/>
            <person name="Mizuno T."/>
            <person name="Morinaga M."/>
            <person name="Sasaki M."/>
            <person name="Togashi T."/>
            <person name="Oyama M."/>
            <person name="Hata H."/>
            <person name="Watanabe M."/>
            <person name="Komatsu T."/>
            <person name="Mizushima-Sugano J."/>
            <person name="Satoh T."/>
            <person name="Shirai Y."/>
            <person name="Takahashi Y."/>
            <person name="Nakagawa K."/>
            <person name="Okumura K."/>
            <person name="Nagase T."/>
            <person name="Nomura N."/>
            <person name="Kikuchi H."/>
            <person name="Masuho Y."/>
            <person name="Yamashita R."/>
            <person name="Nakai K."/>
            <person name="Yada T."/>
            <person name="Nakamura Y."/>
            <person name="Ohara O."/>
            <person name="Isogai T."/>
            <person name="Sugano S."/>
        </authorList>
    </citation>
    <scope>NUCLEOTIDE SEQUENCE [LARGE SCALE MRNA]</scope>
    <source>
        <tissue>Testis</tissue>
    </source>
</reference>
<reference key="2">
    <citation type="submission" date="2005-07" db="EMBL/GenBank/DDBJ databases">
        <authorList>
            <person name="Mural R.J."/>
            <person name="Istrail S."/>
            <person name="Sutton G.G."/>
            <person name="Florea L."/>
            <person name="Halpern A.L."/>
            <person name="Mobarry C.M."/>
            <person name="Lippert R."/>
            <person name="Walenz B."/>
            <person name="Shatkay H."/>
            <person name="Dew I."/>
            <person name="Miller J.R."/>
            <person name="Flanigan M.J."/>
            <person name="Edwards N.J."/>
            <person name="Bolanos R."/>
            <person name="Fasulo D."/>
            <person name="Halldorsson B.V."/>
            <person name="Hannenhalli S."/>
            <person name="Turner R."/>
            <person name="Yooseph S."/>
            <person name="Lu F."/>
            <person name="Nusskern D.R."/>
            <person name="Shue B.C."/>
            <person name="Zheng X.H."/>
            <person name="Zhong F."/>
            <person name="Delcher A.L."/>
            <person name="Huson D.H."/>
            <person name="Kravitz S.A."/>
            <person name="Mouchard L."/>
            <person name="Reinert K."/>
            <person name="Remington K.A."/>
            <person name="Clark A.G."/>
            <person name="Waterman M.S."/>
            <person name="Eichler E.E."/>
            <person name="Adams M.D."/>
            <person name="Hunkapiller M.W."/>
            <person name="Myers E.W."/>
            <person name="Venter J.C."/>
        </authorList>
    </citation>
    <scope>NUCLEOTIDE SEQUENCE [LARGE SCALE GENOMIC DNA]</scope>
</reference>
<reference key="3">
    <citation type="journal article" date="2004" name="Genome Res.">
        <title>The status, quality, and expansion of the NIH full-length cDNA project: the Mammalian Gene Collection (MGC).</title>
        <authorList>
            <consortium name="The MGC Project Team"/>
        </authorList>
    </citation>
    <scope>NUCLEOTIDE SEQUENCE [LARGE SCALE MRNA]</scope>
    <source>
        <tissue>Testis</tissue>
    </source>
</reference>
<accession>Q8N7X8</accession>
<keyword id="KW-0472">Membrane</keyword>
<keyword id="KW-1185">Reference proteome</keyword>
<keyword id="KW-0812">Transmembrane</keyword>
<keyword id="KW-1133">Transmembrane helix</keyword>
<sequence>MLPLLQLVPAKLLNSSCSLEKTLQCSCSFHGIPTPSVQWWMGGVPVGVDGMDGSLQVTSTMLGPWANSTISLTEEPEMGMRLLCEGKNQNGTHALSILLMSRKSSLAAQAFVKGLIQGAIYAGIVIALLFLCLLPLIVKHIRKKQAKKAAAIRAKKSSKVRASQELEMSLKPEEPGKPVVATFSESRILEKQDKRAS</sequence>
<proteinExistence type="evidence at protein level"/>
<dbReference type="EMBL" id="AK097554">
    <property type="protein sequence ID" value="BAC05098.1"/>
    <property type="molecule type" value="mRNA"/>
</dbReference>
<dbReference type="EMBL" id="CH471135">
    <property type="protein sequence ID" value="EAW71998.1"/>
    <property type="molecule type" value="Genomic_DNA"/>
</dbReference>
<dbReference type="EMBL" id="BC126357">
    <property type="protein sequence ID" value="AAI26358.1"/>
    <property type="molecule type" value="mRNA"/>
</dbReference>
<dbReference type="EMBL" id="BC126359">
    <property type="protein sequence ID" value="AAI26360.1"/>
    <property type="molecule type" value="mRNA"/>
</dbReference>
<dbReference type="CCDS" id="CCDS12827.1"/>
<dbReference type="RefSeq" id="NP_001372394.1">
    <property type="nucleotide sequence ID" value="NM_001385465.1"/>
</dbReference>
<dbReference type="RefSeq" id="NP_001372395.1">
    <property type="nucleotide sequence ID" value="NM_001385466.1"/>
</dbReference>
<dbReference type="RefSeq" id="NP_775906.1">
    <property type="nucleotide sequence ID" value="NM_173635.3"/>
</dbReference>
<dbReference type="RefSeq" id="XP_005258856.1">
    <property type="nucleotide sequence ID" value="XM_005258799.4"/>
</dbReference>
<dbReference type="RefSeq" id="XP_011525123.1">
    <property type="nucleotide sequence ID" value="XM_011526821.2"/>
</dbReference>
<dbReference type="RefSeq" id="XP_054176617.1">
    <property type="nucleotide sequence ID" value="XM_054320642.1"/>
</dbReference>
<dbReference type="BioGRID" id="129848">
    <property type="interactions" value="115"/>
</dbReference>
<dbReference type="FunCoup" id="Q8N7X8">
    <property type="interactions" value="87"/>
</dbReference>
<dbReference type="IntAct" id="Q8N7X8">
    <property type="interactions" value="113"/>
</dbReference>
<dbReference type="GlyGen" id="Q8N7X8">
    <property type="glycosylation" value="3 sites, 1 O-linked glycan (2 sites)"/>
</dbReference>
<dbReference type="iPTMnet" id="Q8N7X8"/>
<dbReference type="BioMuta" id="SIGLECL1"/>
<dbReference type="DMDM" id="74729309"/>
<dbReference type="MassIVE" id="Q8N7X8"/>
<dbReference type="PaxDb" id="9606-ENSP00000321249"/>
<dbReference type="Antibodypedia" id="62941">
    <property type="antibodies" value="31 antibodies from 11 providers"/>
</dbReference>
<dbReference type="DNASU" id="284369"/>
<dbReference type="Ensembl" id="ENST00000316401.11">
    <property type="protein sequence ID" value="ENSP00000321249.6"/>
    <property type="gene ID" value="ENSG00000179213.14"/>
</dbReference>
<dbReference type="Ensembl" id="ENST00000601727.6">
    <property type="protein sequence ID" value="ENSP00000469601.2"/>
    <property type="gene ID" value="ENSG00000179213.14"/>
</dbReference>
<dbReference type="Ensembl" id="ENST00000614422.4">
    <property type="protein sequence ID" value="ENSP00000480286.1"/>
    <property type="gene ID" value="ENSG00000179213.14"/>
</dbReference>
<dbReference type="GeneID" id="284369"/>
<dbReference type="KEGG" id="hsa:284369"/>
<dbReference type="MANE-Select" id="ENST00000601727.6">
    <property type="protein sequence ID" value="ENSP00000469601.2"/>
    <property type="RefSeq nucleotide sequence ID" value="NM_001385465.1"/>
    <property type="RefSeq protein sequence ID" value="NP_001372394.1"/>
</dbReference>
<dbReference type="UCSC" id="uc002pwb.2">
    <property type="organism name" value="human"/>
</dbReference>
<dbReference type="AGR" id="HGNC:26856"/>
<dbReference type="CTD" id="284369"/>
<dbReference type="DisGeNET" id="284369"/>
<dbReference type="GeneCards" id="SIGLECL1"/>
<dbReference type="HGNC" id="HGNC:26856">
    <property type="gene designation" value="SIGLECL1"/>
</dbReference>
<dbReference type="HPA" id="ENSG00000179213">
    <property type="expression patterns" value="Tissue enriched (testis)"/>
</dbReference>
<dbReference type="neXtProt" id="NX_Q8N7X8"/>
<dbReference type="OpenTargets" id="ENSG00000179213"/>
<dbReference type="PharmGKB" id="PA165393060"/>
<dbReference type="VEuPathDB" id="HostDB:ENSG00000179213"/>
<dbReference type="eggNOG" id="ENOG502RWXE">
    <property type="taxonomic scope" value="Eukaryota"/>
</dbReference>
<dbReference type="GeneTree" id="ENSGT01080000257333"/>
<dbReference type="HOGENOM" id="CLU_096844_0_0_1"/>
<dbReference type="InParanoid" id="Q8N7X8"/>
<dbReference type="OMA" id="ACQEPKM"/>
<dbReference type="OrthoDB" id="10039395at2759"/>
<dbReference type="PAN-GO" id="Q8N7X8">
    <property type="GO annotations" value="3 GO annotations based on evolutionary models"/>
</dbReference>
<dbReference type="PhylomeDB" id="Q8N7X8"/>
<dbReference type="TreeFam" id="TF340027"/>
<dbReference type="PathwayCommons" id="Q8N7X8"/>
<dbReference type="SignaLink" id="Q8N7X8"/>
<dbReference type="BioGRID-ORCS" id="284369">
    <property type="hits" value="11 hits in 1138 CRISPR screens"/>
</dbReference>
<dbReference type="GenomeRNAi" id="284369"/>
<dbReference type="Pharos" id="Q8N7X8">
    <property type="development level" value="Tdark"/>
</dbReference>
<dbReference type="PRO" id="PR:Q8N7X8"/>
<dbReference type="Proteomes" id="UP000005640">
    <property type="component" value="Chromosome 19"/>
</dbReference>
<dbReference type="RNAct" id="Q8N7X8">
    <property type="molecule type" value="protein"/>
</dbReference>
<dbReference type="Bgee" id="ENSG00000179213">
    <property type="expression patterns" value="Expressed in sperm and 43 other cell types or tissues"/>
</dbReference>
<dbReference type="ExpressionAtlas" id="Q8N7X8">
    <property type="expression patterns" value="baseline and differential"/>
</dbReference>
<dbReference type="GO" id="GO:0016020">
    <property type="term" value="C:membrane"/>
    <property type="evidence" value="ECO:0007669"/>
    <property type="project" value="UniProtKB-SubCell"/>
</dbReference>
<dbReference type="Gene3D" id="2.60.40.10">
    <property type="entry name" value="Immunoglobulins"/>
    <property type="match status" value="1"/>
</dbReference>
<dbReference type="InterPro" id="IPR036179">
    <property type="entry name" value="Ig-like_dom_sf"/>
</dbReference>
<dbReference type="InterPro" id="IPR013783">
    <property type="entry name" value="Ig-like_fold"/>
</dbReference>
<dbReference type="InterPro" id="IPR051036">
    <property type="entry name" value="SIGLEC"/>
</dbReference>
<dbReference type="PANTHER" id="PTHR12035">
    <property type="entry name" value="SIALIC ACID BINDING IMMUNOGLOBULIN-LIKE LECTIN"/>
    <property type="match status" value="1"/>
</dbReference>
<dbReference type="PANTHER" id="PTHR12035:SF125">
    <property type="entry name" value="SIALIC ACID-BINDING IG-LIKE LECTIN 5"/>
    <property type="match status" value="1"/>
</dbReference>
<dbReference type="SUPFAM" id="SSF48726">
    <property type="entry name" value="Immunoglobulin"/>
    <property type="match status" value="1"/>
</dbReference>
<comment type="interaction">
    <interactant intactId="EBI-18052611">
        <id>Q8N7X8</id>
    </interactant>
    <interactant intactId="EBI-715495">
        <id>P05090</id>
        <label>APOD</label>
    </interactant>
    <organismsDiffer>false</organismsDiffer>
    <experiments>3</experiments>
</comment>
<comment type="interaction">
    <interactant intactId="EBI-18052611">
        <id>Q8N7X8</id>
    </interactant>
    <interactant intactId="EBI-3907816">
        <id>P54852</id>
        <label>EMP3</label>
    </interactant>
    <organismsDiffer>false</organismsDiffer>
    <experiments>3</experiments>
</comment>
<comment type="interaction">
    <interactant intactId="EBI-18052611">
        <id>Q8N7X8</id>
    </interactant>
    <interactant intactId="EBI-10243654">
        <id>Q5BVD1</id>
        <label>TTMP</label>
    </interactant>
    <organismsDiffer>false</organismsDiffer>
    <experiments>4</experiments>
</comment>
<comment type="subcellular location">
    <subcellularLocation>
        <location evidence="3">Membrane</location>
        <topology evidence="3">Single-pass membrane protein</topology>
    </subcellularLocation>
</comment>
<evidence type="ECO:0000255" key="1"/>
<evidence type="ECO:0000256" key="2">
    <source>
        <dbReference type="SAM" id="MobiDB-lite"/>
    </source>
</evidence>
<evidence type="ECO:0000305" key="3"/>
<name>SIGL1_HUMAN</name>
<feature type="chain" id="PRO_0000332128" description="SIGLEC family-like protein 1">
    <location>
        <begin position="1"/>
        <end position="197"/>
    </location>
</feature>
<feature type="transmembrane region" description="Helical" evidence="1">
    <location>
        <begin position="118"/>
        <end position="138"/>
    </location>
</feature>
<feature type="region of interest" description="Disordered" evidence="2">
    <location>
        <begin position="160"/>
        <end position="179"/>
    </location>
</feature>
<feature type="compositionally biased region" description="Basic and acidic residues" evidence="2">
    <location>
        <begin position="162"/>
        <end position="176"/>
    </location>
</feature>
<gene>
    <name type="primary">SIGLECL1</name>
    <name type="synonym">C19orf75</name>
</gene>